<accession>B2FQ38</accession>
<gene>
    <name evidence="1" type="primary">rpoB</name>
    <name type="ordered locus">Smlt0898</name>
</gene>
<keyword id="KW-0240">DNA-directed RNA polymerase</keyword>
<keyword id="KW-0548">Nucleotidyltransferase</keyword>
<keyword id="KW-1185">Reference proteome</keyword>
<keyword id="KW-0804">Transcription</keyword>
<keyword id="KW-0808">Transferase</keyword>
<reference key="1">
    <citation type="journal article" date="2008" name="Genome Biol.">
        <title>The complete genome, comparative and functional analysis of Stenotrophomonas maltophilia reveals an organism heavily shielded by drug resistance determinants.</title>
        <authorList>
            <person name="Crossman L.C."/>
            <person name="Gould V.C."/>
            <person name="Dow J.M."/>
            <person name="Vernikos G.S."/>
            <person name="Okazaki A."/>
            <person name="Sebaihia M."/>
            <person name="Saunders D."/>
            <person name="Arrowsmith C."/>
            <person name="Carver T."/>
            <person name="Peters N."/>
            <person name="Adlem E."/>
            <person name="Kerhornou A."/>
            <person name="Lord A."/>
            <person name="Murphy L."/>
            <person name="Seeger K."/>
            <person name="Squares R."/>
            <person name="Rutter S."/>
            <person name="Quail M.A."/>
            <person name="Rajandream M.A."/>
            <person name="Harris D."/>
            <person name="Churcher C."/>
            <person name="Bentley S.D."/>
            <person name="Parkhill J."/>
            <person name="Thomson N.R."/>
            <person name="Avison M.B."/>
        </authorList>
    </citation>
    <scope>NUCLEOTIDE SEQUENCE [LARGE SCALE GENOMIC DNA]</scope>
    <source>
        <strain>K279a</strain>
    </source>
</reference>
<evidence type="ECO:0000255" key="1">
    <source>
        <dbReference type="HAMAP-Rule" id="MF_01321"/>
    </source>
</evidence>
<feature type="chain" id="PRO_1000141741" description="DNA-directed RNA polymerase subunit beta">
    <location>
        <begin position="1"/>
        <end position="1388"/>
    </location>
</feature>
<proteinExistence type="inferred from homology"/>
<comment type="function">
    <text evidence="1">DNA-dependent RNA polymerase catalyzes the transcription of DNA into RNA using the four ribonucleoside triphosphates as substrates.</text>
</comment>
<comment type="catalytic activity">
    <reaction evidence="1">
        <text>RNA(n) + a ribonucleoside 5'-triphosphate = RNA(n+1) + diphosphate</text>
        <dbReference type="Rhea" id="RHEA:21248"/>
        <dbReference type="Rhea" id="RHEA-COMP:14527"/>
        <dbReference type="Rhea" id="RHEA-COMP:17342"/>
        <dbReference type="ChEBI" id="CHEBI:33019"/>
        <dbReference type="ChEBI" id="CHEBI:61557"/>
        <dbReference type="ChEBI" id="CHEBI:140395"/>
        <dbReference type="EC" id="2.7.7.6"/>
    </reaction>
</comment>
<comment type="subunit">
    <text evidence="1">The RNAP catalytic core consists of 2 alpha, 1 beta, 1 beta' and 1 omega subunit. When a sigma factor is associated with the core the holoenzyme is formed, which can initiate transcription.</text>
</comment>
<comment type="similarity">
    <text evidence="1">Belongs to the RNA polymerase beta chain family.</text>
</comment>
<dbReference type="EC" id="2.7.7.6" evidence="1"/>
<dbReference type="EMBL" id="AM743169">
    <property type="protein sequence ID" value="CAQ44468.1"/>
    <property type="molecule type" value="Genomic_DNA"/>
</dbReference>
<dbReference type="SMR" id="B2FQ38"/>
<dbReference type="EnsemblBacteria" id="CAQ44468">
    <property type="protein sequence ID" value="CAQ44468"/>
    <property type="gene ID" value="Smlt0898"/>
</dbReference>
<dbReference type="KEGG" id="sml:Smlt0898"/>
<dbReference type="eggNOG" id="COG0085">
    <property type="taxonomic scope" value="Bacteria"/>
</dbReference>
<dbReference type="HOGENOM" id="CLU_000524_4_3_6"/>
<dbReference type="Proteomes" id="UP000008840">
    <property type="component" value="Chromosome"/>
</dbReference>
<dbReference type="GO" id="GO:0000428">
    <property type="term" value="C:DNA-directed RNA polymerase complex"/>
    <property type="evidence" value="ECO:0007669"/>
    <property type="project" value="UniProtKB-KW"/>
</dbReference>
<dbReference type="GO" id="GO:0003677">
    <property type="term" value="F:DNA binding"/>
    <property type="evidence" value="ECO:0007669"/>
    <property type="project" value="UniProtKB-UniRule"/>
</dbReference>
<dbReference type="GO" id="GO:0003899">
    <property type="term" value="F:DNA-directed RNA polymerase activity"/>
    <property type="evidence" value="ECO:0007669"/>
    <property type="project" value="UniProtKB-UniRule"/>
</dbReference>
<dbReference type="GO" id="GO:0032549">
    <property type="term" value="F:ribonucleoside binding"/>
    <property type="evidence" value="ECO:0007669"/>
    <property type="project" value="InterPro"/>
</dbReference>
<dbReference type="GO" id="GO:0006351">
    <property type="term" value="P:DNA-templated transcription"/>
    <property type="evidence" value="ECO:0007669"/>
    <property type="project" value="UniProtKB-UniRule"/>
</dbReference>
<dbReference type="CDD" id="cd00653">
    <property type="entry name" value="RNA_pol_B_RPB2"/>
    <property type="match status" value="1"/>
</dbReference>
<dbReference type="FunFam" id="2.40.50.100:FF:000006">
    <property type="entry name" value="DNA-directed RNA polymerase subunit beta"/>
    <property type="match status" value="1"/>
</dbReference>
<dbReference type="FunFam" id="2.40.50.150:FF:000001">
    <property type="entry name" value="DNA-directed RNA polymerase subunit beta"/>
    <property type="match status" value="1"/>
</dbReference>
<dbReference type="FunFam" id="3.90.1800.10:FF:000001">
    <property type="entry name" value="DNA-directed RNA polymerase subunit beta"/>
    <property type="match status" value="1"/>
</dbReference>
<dbReference type="Gene3D" id="2.40.50.100">
    <property type="match status" value="1"/>
</dbReference>
<dbReference type="Gene3D" id="2.40.50.150">
    <property type="match status" value="1"/>
</dbReference>
<dbReference type="Gene3D" id="3.90.1100.10">
    <property type="match status" value="3"/>
</dbReference>
<dbReference type="Gene3D" id="6.10.140.1670">
    <property type="match status" value="1"/>
</dbReference>
<dbReference type="Gene3D" id="2.40.270.10">
    <property type="entry name" value="DNA-directed RNA polymerase, subunit 2, domain 6"/>
    <property type="match status" value="1"/>
</dbReference>
<dbReference type="Gene3D" id="3.90.1800.10">
    <property type="entry name" value="RNA polymerase alpha subunit dimerisation domain"/>
    <property type="match status" value="1"/>
</dbReference>
<dbReference type="Gene3D" id="3.90.1110.10">
    <property type="entry name" value="RNA polymerase Rpb2, domain 2"/>
    <property type="match status" value="1"/>
</dbReference>
<dbReference type="HAMAP" id="MF_01321">
    <property type="entry name" value="RNApol_bact_RpoB"/>
    <property type="match status" value="1"/>
</dbReference>
<dbReference type="InterPro" id="IPR019462">
    <property type="entry name" value="DNA-dir_RNA_pol_bsu_external_1"/>
</dbReference>
<dbReference type="InterPro" id="IPR015712">
    <property type="entry name" value="DNA-dir_RNA_pol_su2"/>
</dbReference>
<dbReference type="InterPro" id="IPR007120">
    <property type="entry name" value="DNA-dir_RNAP_su2_dom"/>
</dbReference>
<dbReference type="InterPro" id="IPR037033">
    <property type="entry name" value="DNA-dir_RNAP_su2_hyb_sf"/>
</dbReference>
<dbReference type="InterPro" id="IPR010243">
    <property type="entry name" value="RNA_pol_bsu_bac"/>
</dbReference>
<dbReference type="InterPro" id="IPR007121">
    <property type="entry name" value="RNA_pol_bsu_CS"/>
</dbReference>
<dbReference type="InterPro" id="IPR007644">
    <property type="entry name" value="RNA_pol_bsu_protrusion"/>
</dbReference>
<dbReference type="InterPro" id="IPR007642">
    <property type="entry name" value="RNA_pol_Rpb2_2"/>
</dbReference>
<dbReference type="InterPro" id="IPR037034">
    <property type="entry name" value="RNA_pol_Rpb2_2_sf"/>
</dbReference>
<dbReference type="InterPro" id="IPR007645">
    <property type="entry name" value="RNA_pol_Rpb2_3"/>
</dbReference>
<dbReference type="InterPro" id="IPR007641">
    <property type="entry name" value="RNA_pol_Rpb2_7"/>
</dbReference>
<dbReference type="InterPro" id="IPR014724">
    <property type="entry name" value="RNA_pol_RPB2_OB-fold"/>
</dbReference>
<dbReference type="NCBIfam" id="NF001616">
    <property type="entry name" value="PRK00405.1"/>
    <property type="match status" value="1"/>
</dbReference>
<dbReference type="NCBIfam" id="TIGR02013">
    <property type="entry name" value="rpoB"/>
    <property type="match status" value="1"/>
</dbReference>
<dbReference type="PANTHER" id="PTHR20856">
    <property type="entry name" value="DNA-DIRECTED RNA POLYMERASE I SUBUNIT 2"/>
    <property type="match status" value="1"/>
</dbReference>
<dbReference type="Pfam" id="PF04563">
    <property type="entry name" value="RNA_pol_Rpb2_1"/>
    <property type="match status" value="1"/>
</dbReference>
<dbReference type="Pfam" id="PF04561">
    <property type="entry name" value="RNA_pol_Rpb2_2"/>
    <property type="match status" value="3"/>
</dbReference>
<dbReference type="Pfam" id="PF04565">
    <property type="entry name" value="RNA_pol_Rpb2_3"/>
    <property type="match status" value="1"/>
</dbReference>
<dbReference type="Pfam" id="PF10385">
    <property type="entry name" value="RNA_pol_Rpb2_45"/>
    <property type="match status" value="1"/>
</dbReference>
<dbReference type="Pfam" id="PF00562">
    <property type="entry name" value="RNA_pol_Rpb2_6"/>
    <property type="match status" value="1"/>
</dbReference>
<dbReference type="Pfam" id="PF04560">
    <property type="entry name" value="RNA_pol_Rpb2_7"/>
    <property type="match status" value="1"/>
</dbReference>
<dbReference type="SUPFAM" id="SSF64484">
    <property type="entry name" value="beta and beta-prime subunits of DNA dependent RNA-polymerase"/>
    <property type="match status" value="1"/>
</dbReference>
<dbReference type="PROSITE" id="PS01166">
    <property type="entry name" value="RNA_POL_BETA"/>
    <property type="match status" value="1"/>
</dbReference>
<organism>
    <name type="scientific">Stenotrophomonas maltophilia (strain K279a)</name>
    <dbReference type="NCBI Taxonomy" id="522373"/>
    <lineage>
        <taxon>Bacteria</taxon>
        <taxon>Pseudomonadati</taxon>
        <taxon>Pseudomonadota</taxon>
        <taxon>Gammaproteobacteria</taxon>
        <taxon>Lysobacterales</taxon>
        <taxon>Lysobacteraceae</taxon>
        <taxon>Stenotrophomonas</taxon>
        <taxon>Stenotrophomonas maltophilia group</taxon>
    </lineage>
</organism>
<sequence>MEDLMTSYSFTEKKRIRKDFGKQRSILEVPFLLAIQVDSYREFLQENVDPAKRTDHGLHAALKSVFPIASYSGNAALEYVGYKLGEPVFDERECRQRGMSYGAPLRVTVRLVIYDRESSTKAIKYVKEQEVYLGEIPLMTENGTFIVNGTERVIVSQLHRSPGVFFDHDRGKTHSSGKLLYSARIIPYRGSWLDFEFDPKDALFTRIDRRRKLPVSILLRALGYSNEEMLAEFFEINTFHINPDEGVQLELVPERLRGETLGFDLADGDKVIVEAGKRITARHIKQLEASGIAALAVPDDYIVGRILSHDVVDASTGELLAQANDEITDEQLQAFRKAGVDAVGTLWVNDLDRGPYLSNTLRIDPTKTQLEALVEIYRMMRPGEPPTKDAAQNLFHNLFFTFERYDLSAVGRMKFNRRVGRKETTGEAVLYDSKYFGERNDEESKRLVAAHGDSSDILDVIKVLTEIRNGRGVVDDIDHLGNRRVRSVGEMAENVFRVGLVRVERAVKERLSMAESEGLTPQELINAKPVAAAIKEFFGSSQLSQFMDQNNPLSEVTHKRRVSALGPGGLTRERAGFEVRDVHPTHYGRVCTIETPEGPNIGLINSLAVYARTNQYGFLETPYRKVVDGKVYDEVEFLSAIEENEYVIAQANALTDAKGTLTEQFVPCRFQGESLLKPPAEVHFMDVSPMQTVSIAAALVPFLEHDDANRALMGANMQRQAVPTLRAQKPLVGTGIERAVARDSGVTVNARRGGEIVQIDAARIVVKVNEEEIVGATDAGVDIYNLVKYTRSNQNTCINQRPLVQVGDVIARGDVLADGPSTDIGELALGQNMLIAFMPWNGYNFEDSILLSERVVEEDRYTTIHIEELTCVARDTKLGPEEISADIPNVSEQALNRLDESGVVYIGAEVRAGDIMVGKVTPKGESQLTPEEKLLRAIFGEKASDVKDSSLRVPPGMDGTVIDVQVFTRDGIEKDKRARQIEESEIKRVKKDFDDQFRILEAAIYMRLRSQIVGKVVNGGAGLKKGDVITDAFLDGLKKADWFALRMKDEDASEAIERAQKQIQAHEKEFERRFADKRGKITAGDDLAPGVLKMVKVFLAVKRRIQPGDKMAGRHGNKGVVSNVVPVEDMPYMASGETVDIVLNPLGVPSRMNIGQILEVHLGWAAKGLGRKIQAMMEAQAAVADLRKFLDDIYNHDDTNVANRVDLSQFSDEELLRLARNLTDGVPMATPVFDGATEAEIKRMLELADLPSSGQTQLYDGRTGEAFDRHTTVGYMHYLKLNHLVDDKMHARSTGPYSLVTQQPLGGKAQFGGQRFGEMEVWALEAYGAAYTLQEMLTVKSDDVQGRNQMYKNIVDGEHEMVAGMPESFNVLVKEIRSLAINMELEDN</sequence>
<name>RPOB_STRMK</name>
<protein>
    <recommendedName>
        <fullName evidence="1">DNA-directed RNA polymerase subunit beta</fullName>
        <shortName evidence="1">RNAP subunit beta</shortName>
        <ecNumber evidence="1">2.7.7.6</ecNumber>
    </recommendedName>
    <alternativeName>
        <fullName evidence="1">RNA polymerase subunit beta</fullName>
    </alternativeName>
    <alternativeName>
        <fullName evidence="1">Transcriptase subunit beta</fullName>
    </alternativeName>
</protein>